<proteinExistence type="inferred from homology"/>
<feature type="chain" id="PRO_1000006113" description="Elongation factor Ts">
    <location>
        <begin position="1"/>
        <end position="342"/>
    </location>
</feature>
<feature type="region of interest" description="Involved in Mg(2+) ion dislocation from EF-Tu" evidence="1">
    <location>
        <begin position="80"/>
        <end position="83"/>
    </location>
</feature>
<evidence type="ECO:0000255" key="1">
    <source>
        <dbReference type="HAMAP-Rule" id="MF_00050"/>
    </source>
</evidence>
<name>EFTS_LACDB</name>
<accession>Q049U3</accession>
<reference key="1">
    <citation type="journal article" date="2006" name="Proc. Natl. Acad. Sci. U.S.A.">
        <title>Comparative genomics of the lactic acid bacteria.</title>
        <authorList>
            <person name="Makarova K.S."/>
            <person name="Slesarev A."/>
            <person name="Wolf Y.I."/>
            <person name="Sorokin A."/>
            <person name="Mirkin B."/>
            <person name="Koonin E.V."/>
            <person name="Pavlov A."/>
            <person name="Pavlova N."/>
            <person name="Karamychev V."/>
            <person name="Polouchine N."/>
            <person name="Shakhova V."/>
            <person name="Grigoriev I."/>
            <person name="Lou Y."/>
            <person name="Rohksar D."/>
            <person name="Lucas S."/>
            <person name="Huang K."/>
            <person name="Goodstein D.M."/>
            <person name="Hawkins T."/>
            <person name="Plengvidhya V."/>
            <person name="Welker D."/>
            <person name="Hughes J."/>
            <person name="Goh Y."/>
            <person name="Benson A."/>
            <person name="Baldwin K."/>
            <person name="Lee J.-H."/>
            <person name="Diaz-Muniz I."/>
            <person name="Dosti B."/>
            <person name="Smeianov V."/>
            <person name="Wechter W."/>
            <person name="Barabote R."/>
            <person name="Lorca G."/>
            <person name="Altermann E."/>
            <person name="Barrangou R."/>
            <person name="Ganesan B."/>
            <person name="Xie Y."/>
            <person name="Rawsthorne H."/>
            <person name="Tamir D."/>
            <person name="Parker C."/>
            <person name="Breidt F."/>
            <person name="Broadbent J.R."/>
            <person name="Hutkins R."/>
            <person name="O'Sullivan D."/>
            <person name="Steele J."/>
            <person name="Unlu G."/>
            <person name="Saier M.H. Jr."/>
            <person name="Klaenhammer T."/>
            <person name="Richardson P."/>
            <person name="Kozyavkin S."/>
            <person name="Weimer B.C."/>
            <person name="Mills D.A."/>
        </authorList>
    </citation>
    <scope>NUCLEOTIDE SEQUENCE [LARGE SCALE GENOMIC DNA]</scope>
    <source>
        <strain>ATCC BAA-365 / Lb-18</strain>
    </source>
</reference>
<gene>
    <name evidence="1" type="primary">tsf</name>
    <name type="ordered locus">LBUL_1253</name>
</gene>
<comment type="function">
    <text evidence="1">Associates with the EF-Tu.GDP complex and induces the exchange of GDP to GTP. It remains bound to the aminoacyl-tRNA.EF-Tu.GTP complex up to the GTP hydrolysis stage on the ribosome.</text>
</comment>
<comment type="subcellular location">
    <subcellularLocation>
        <location evidence="1">Cytoplasm</location>
    </subcellularLocation>
</comment>
<comment type="similarity">
    <text evidence="1">Belongs to the EF-Ts family.</text>
</comment>
<organism>
    <name type="scientific">Lactobacillus delbrueckii subsp. bulgaricus (strain ATCC BAA-365 / Lb-18)</name>
    <dbReference type="NCBI Taxonomy" id="321956"/>
    <lineage>
        <taxon>Bacteria</taxon>
        <taxon>Bacillati</taxon>
        <taxon>Bacillota</taxon>
        <taxon>Bacilli</taxon>
        <taxon>Lactobacillales</taxon>
        <taxon>Lactobacillaceae</taxon>
        <taxon>Lactobacillus</taxon>
    </lineage>
</organism>
<sequence>MANITAKQVKELRETTGAGVMDAKKALVEAEGDMQRAIEIIHEKGEAKAAKKANRIAAEGLTGVYVDGNVAAIVEVNAETDFVAQNEQFKTLVNETAETIAKGKPANNEEALALTMPSGESLEEAYVNATATIGEKISFRRFAVLEKTDDQHFGAYQHNGGHIGVLTVVEGGDEALAKHIAMHIAAMSPKVLSYKELDPAFVREELAQLNHKIDQDNESRAMVNKPALPHLKYGSKAQLTDEVIAQAEEDIKAELKAEGKPEKIWDKIIPGKMARFMLDNTKVDQENTLLAQLYVMDDSKTVEQYLESVNASVVSFVRFEVGEGIEKKQEDFAAEVAAQMKN</sequence>
<dbReference type="EMBL" id="CP000412">
    <property type="protein sequence ID" value="ABJ58779.1"/>
    <property type="molecule type" value="Genomic_DNA"/>
</dbReference>
<dbReference type="RefSeq" id="WP_004560782.1">
    <property type="nucleotide sequence ID" value="NC_008529.1"/>
</dbReference>
<dbReference type="SMR" id="Q049U3"/>
<dbReference type="KEGG" id="lbu:LBUL_1253"/>
<dbReference type="HOGENOM" id="CLU_047155_0_1_9"/>
<dbReference type="BioCyc" id="LDEL321956:LBUL_RS05885-MONOMER"/>
<dbReference type="GO" id="GO:0005737">
    <property type="term" value="C:cytoplasm"/>
    <property type="evidence" value="ECO:0007669"/>
    <property type="project" value="UniProtKB-SubCell"/>
</dbReference>
<dbReference type="GO" id="GO:0003746">
    <property type="term" value="F:translation elongation factor activity"/>
    <property type="evidence" value="ECO:0007669"/>
    <property type="project" value="UniProtKB-UniRule"/>
</dbReference>
<dbReference type="CDD" id="cd14275">
    <property type="entry name" value="UBA_EF-Ts"/>
    <property type="match status" value="1"/>
</dbReference>
<dbReference type="FunFam" id="1.10.286.20:FF:000004">
    <property type="entry name" value="Elongation factor Ts"/>
    <property type="match status" value="1"/>
</dbReference>
<dbReference type="FunFam" id="1.10.8.10:FF:000001">
    <property type="entry name" value="Elongation factor Ts"/>
    <property type="match status" value="1"/>
</dbReference>
<dbReference type="Gene3D" id="1.10.286.20">
    <property type="match status" value="1"/>
</dbReference>
<dbReference type="Gene3D" id="1.10.8.10">
    <property type="entry name" value="DNA helicase RuvA subunit, C-terminal domain"/>
    <property type="match status" value="1"/>
</dbReference>
<dbReference type="Gene3D" id="3.30.479.20">
    <property type="entry name" value="Elongation factor Ts, dimerisation domain"/>
    <property type="match status" value="2"/>
</dbReference>
<dbReference type="HAMAP" id="MF_00050">
    <property type="entry name" value="EF_Ts"/>
    <property type="match status" value="1"/>
</dbReference>
<dbReference type="InterPro" id="IPR036402">
    <property type="entry name" value="EF-Ts_dimer_sf"/>
</dbReference>
<dbReference type="InterPro" id="IPR001816">
    <property type="entry name" value="Transl_elong_EFTs/EF1B"/>
</dbReference>
<dbReference type="InterPro" id="IPR014039">
    <property type="entry name" value="Transl_elong_EFTs/EF1B_dimer"/>
</dbReference>
<dbReference type="InterPro" id="IPR018101">
    <property type="entry name" value="Transl_elong_Ts_CS"/>
</dbReference>
<dbReference type="InterPro" id="IPR009060">
    <property type="entry name" value="UBA-like_sf"/>
</dbReference>
<dbReference type="NCBIfam" id="TIGR00116">
    <property type="entry name" value="tsf"/>
    <property type="match status" value="1"/>
</dbReference>
<dbReference type="PANTHER" id="PTHR11741">
    <property type="entry name" value="ELONGATION FACTOR TS"/>
    <property type="match status" value="1"/>
</dbReference>
<dbReference type="PANTHER" id="PTHR11741:SF0">
    <property type="entry name" value="ELONGATION FACTOR TS, MITOCHONDRIAL"/>
    <property type="match status" value="1"/>
</dbReference>
<dbReference type="Pfam" id="PF00889">
    <property type="entry name" value="EF_TS"/>
    <property type="match status" value="1"/>
</dbReference>
<dbReference type="SUPFAM" id="SSF54713">
    <property type="entry name" value="Elongation factor Ts (EF-Ts), dimerisation domain"/>
    <property type="match status" value="1"/>
</dbReference>
<dbReference type="SUPFAM" id="SSF46934">
    <property type="entry name" value="UBA-like"/>
    <property type="match status" value="1"/>
</dbReference>
<dbReference type="PROSITE" id="PS01126">
    <property type="entry name" value="EF_TS_1"/>
    <property type="match status" value="1"/>
</dbReference>
<dbReference type="PROSITE" id="PS01127">
    <property type="entry name" value="EF_TS_2"/>
    <property type="match status" value="1"/>
</dbReference>
<keyword id="KW-0963">Cytoplasm</keyword>
<keyword id="KW-0251">Elongation factor</keyword>
<keyword id="KW-0648">Protein biosynthesis</keyword>
<protein>
    <recommendedName>
        <fullName evidence="1">Elongation factor Ts</fullName>
        <shortName evidence="1">EF-Ts</shortName>
    </recommendedName>
</protein>